<sequence>MNMQEVYEYLSTVLPEGHVKQDEMLKNHTHIKVGGKADVFVAPTNYDEIQEVIKYANKYNIPVTFLGNGSNVIIKDGGIRGITVSLIHITGVTVTGTTIVAQCGAAIIDVSRIALDHNLTGLEFACGIPGSVGGALYMNAGAYGGEISFVLTEAVVMTGDGELRTLTKEAFEFGYRKSVFANNHYIILEARFELEEGVYEEIKAKMDDLTFKRESKQPLEYPSCGSVFKRPPNNFAGKLIQESGLQGKRIGGVEVSLKHAGFMVNVDNGTAQDYIDLIHFVQKTVEEKFGVKLEREVRIIGEDKE</sequence>
<reference key="1">
    <citation type="journal article" date="2003" name="Nature">
        <title>The genome sequence of Bacillus anthracis Ames and comparison to closely related bacteria.</title>
        <authorList>
            <person name="Read T.D."/>
            <person name="Peterson S.N."/>
            <person name="Tourasse N.J."/>
            <person name="Baillie L.W."/>
            <person name="Paulsen I.T."/>
            <person name="Nelson K.E."/>
            <person name="Tettelin H."/>
            <person name="Fouts D.E."/>
            <person name="Eisen J.A."/>
            <person name="Gill S.R."/>
            <person name="Holtzapple E.K."/>
            <person name="Okstad O.A."/>
            <person name="Helgason E."/>
            <person name="Rilstone J."/>
            <person name="Wu M."/>
            <person name="Kolonay J.F."/>
            <person name="Beanan M.J."/>
            <person name="Dodson R.J."/>
            <person name="Brinkac L.M."/>
            <person name="Gwinn M.L."/>
            <person name="DeBoy R.T."/>
            <person name="Madpu R."/>
            <person name="Daugherty S.C."/>
            <person name="Durkin A.S."/>
            <person name="Haft D.H."/>
            <person name="Nelson W.C."/>
            <person name="Peterson J.D."/>
            <person name="Pop M."/>
            <person name="Khouri H.M."/>
            <person name="Radune D."/>
            <person name="Benton J.L."/>
            <person name="Mahamoud Y."/>
            <person name="Jiang L."/>
            <person name="Hance I.R."/>
            <person name="Weidman J.F."/>
            <person name="Berry K.J."/>
            <person name="Plaut R.D."/>
            <person name="Wolf A.M."/>
            <person name="Watkins K.L."/>
            <person name="Nierman W.C."/>
            <person name="Hazen A."/>
            <person name="Cline R.T."/>
            <person name="Redmond C."/>
            <person name="Thwaite J.E."/>
            <person name="White O."/>
            <person name="Salzberg S.L."/>
            <person name="Thomason B."/>
            <person name="Friedlander A.M."/>
            <person name="Koehler T.M."/>
            <person name="Hanna P.C."/>
            <person name="Kolstoe A.-B."/>
            <person name="Fraser C.M."/>
        </authorList>
    </citation>
    <scope>NUCLEOTIDE SEQUENCE [LARGE SCALE GENOMIC DNA]</scope>
    <source>
        <strain>Ames / isolate Porton</strain>
    </source>
</reference>
<reference key="2">
    <citation type="journal article" date="2009" name="J. Bacteriol.">
        <title>The complete genome sequence of Bacillus anthracis Ames 'Ancestor'.</title>
        <authorList>
            <person name="Ravel J."/>
            <person name="Jiang L."/>
            <person name="Stanley S.T."/>
            <person name="Wilson M.R."/>
            <person name="Decker R.S."/>
            <person name="Read T.D."/>
            <person name="Worsham P."/>
            <person name="Keim P.S."/>
            <person name="Salzberg S.L."/>
            <person name="Fraser-Liggett C.M."/>
            <person name="Rasko D.A."/>
        </authorList>
    </citation>
    <scope>NUCLEOTIDE SEQUENCE [LARGE SCALE GENOMIC DNA]</scope>
    <source>
        <strain>Ames ancestor</strain>
    </source>
</reference>
<reference key="3">
    <citation type="submission" date="2004-01" db="EMBL/GenBank/DDBJ databases">
        <title>Complete genome sequence of Bacillus anthracis Sterne.</title>
        <authorList>
            <person name="Brettin T.S."/>
            <person name="Bruce D."/>
            <person name="Challacombe J.F."/>
            <person name="Gilna P."/>
            <person name="Han C."/>
            <person name="Hill K."/>
            <person name="Hitchcock P."/>
            <person name="Jackson P."/>
            <person name="Keim P."/>
            <person name="Longmire J."/>
            <person name="Lucas S."/>
            <person name="Okinaka R."/>
            <person name="Richardson P."/>
            <person name="Rubin E."/>
            <person name="Tice H."/>
        </authorList>
    </citation>
    <scope>NUCLEOTIDE SEQUENCE [LARGE SCALE GENOMIC DNA]</scope>
    <source>
        <strain>Sterne</strain>
    </source>
</reference>
<name>MURB2_BACAN</name>
<keyword id="KW-0131">Cell cycle</keyword>
<keyword id="KW-0132">Cell division</keyword>
<keyword id="KW-0133">Cell shape</keyword>
<keyword id="KW-0961">Cell wall biogenesis/degradation</keyword>
<keyword id="KW-0963">Cytoplasm</keyword>
<keyword id="KW-0274">FAD</keyword>
<keyword id="KW-0285">Flavoprotein</keyword>
<keyword id="KW-0521">NADP</keyword>
<keyword id="KW-0560">Oxidoreductase</keyword>
<keyword id="KW-0573">Peptidoglycan synthesis</keyword>
<keyword id="KW-1185">Reference proteome</keyword>
<gene>
    <name type="primary">murB2</name>
    <name type="synonym">murB-2</name>
    <name type="ordered locus">BA_5315</name>
    <name type="ordered locus">GBAA_5315</name>
    <name type="ordered locus">BAS4937</name>
</gene>
<accession>Q81XC5</accession>
<accession>Q6HR60</accession>
<accession>Q6KKH7</accession>
<protein>
    <recommendedName>
        <fullName>UDP-N-acetylenolpyruvoylglucosamine reductase 2</fullName>
        <ecNumber>1.3.1.98</ecNumber>
    </recommendedName>
    <alternativeName>
        <fullName>UDP-N-acetylmuramate dehydrogenase 2</fullName>
    </alternativeName>
</protein>
<dbReference type="EC" id="1.3.1.98"/>
<dbReference type="EMBL" id="AE016879">
    <property type="protein sequence ID" value="AAP28977.1"/>
    <property type="molecule type" value="Genomic_DNA"/>
</dbReference>
<dbReference type="EMBL" id="AE017334">
    <property type="protein sequence ID" value="AAT34448.1"/>
    <property type="molecule type" value="Genomic_DNA"/>
</dbReference>
<dbReference type="EMBL" id="AE017225">
    <property type="protein sequence ID" value="AAT57228.1"/>
    <property type="molecule type" value="Genomic_DNA"/>
</dbReference>
<dbReference type="RefSeq" id="NP_847491.1">
    <property type="nucleotide sequence ID" value="NC_003997.3"/>
</dbReference>
<dbReference type="RefSeq" id="YP_031178.1">
    <property type="nucleotide sequence ID" value="NC_005945.1"/>
</dbReference>
<dbReference type="SMR" id="Q81XC5"/>
<dbReference type="STRING" id="261594.GBAA_5315"/>
<dbReference type="DNASU" id="1084813"/>
<dbReference type="KEGG" id="ban:BA_5315"/>
<dbReference type="KEGG" id="banh:HYU01_25980"/>
<dbReference type="KEGG" id="bar:GBAA_5315"/>
<dbReference type="KEGG" id="bat:BAS4937"/>
<dbReference type="PATRIC" id="fig|198094.11.peg.5275"/>
<dbReference type="eggNOG" id="COG0812">
    <property type="taxonomic scope" value="Bacteria"/>
</dbReference>
<dbReference type="HOGENOM" id="CLU_035304_1_1_9"/>
<dbReference type="OMA" id="APLTWFR"/>
<dbReference type="OrthoDB" id="9804753at2"/>
<dbReference type="UniPathway" id="UPA00219"/>
<dbReference type="Proteomes" id="UP000000427">
    <property type="component" value="Chromosome"/>
</dbReference>
<dbReference type="Proteomes" id="UP000000594">
    <property type="component" value="Chromosome"/>
</dbReference>
<dbReference type="GO" id="GO:0005829">
    <property type="term" value="C:cytosol"/>
    <property type="evidence" value="ECO:0007669"/>
    <property type="project" value="TreeGrafter"/>
</dbReference>
<dbReference type="GO" id="GO:0071949">
    <property type="term" value="F:FAD binding"/>
    <property type="evidence" value="ECO:0007669"/>
    <property type="project" value="InterPro"/>
</dbReference>
<dbReference type="GO" id="GO:0008762">
    <property type="term" value="F:UDP-N-acetylmuramate dehydrogenase activity"/>
    <property type="evidence" value="ECO:0007669"/>
    <property type="project" value="UniProtKB-UniRule"/>
</dbReference>
<dbReference type="GO" id="GO:0051301">
    <property type="term" value="P:cell division"/>
    <property type="evidence" value="ECO:0007669"/>
    <property type="project" value="UniProtKB-KW"/>
</dbReference>
<dbReference type="GO" id="GO:0071555">
    <property type="term" value="P:cell wall organization"/>
    <property type="evidence" value="ECO:0007669"/>
    <property type="project" value="UniProtKB-KW"/>
</dbReference>
<dbReference type="GO" id="GO:0009252">
    <property type="term" value="P:peptidoglycan biosynthetic process"/>
    <property type="evidence" value="ECO:0007669"/>
    <property type="project" value="UniProtKB-UniRule"/>
</dbReference>
<dbReference type="GO" id="GO:0008360">
    <property type="term" value="P:regulation of cell shape"/>
    <property type="evidence" value="ECO:0007669"/>
    <property type="project" value="UniProtKB-KW"/>
</dbReference>
<dbReference type="FunFam" id="3.30.465.10:FF:000019">
    <property type="entry name" value="UDP-N-acetylenolpyruvoylglucosamine reductase"/>
    <property type="match status" value="1"/>
</dbReference>
<dbReference type="FunFam" id="3.90.78.10:FF:000001">
    <property type="entry name" value="UDP-N-acetylenolpyruvoylglucosamine reductase"/>
    <property type="match status" value="1"/>
</dbReference>
<dbReference type="Gene3D" id="3.30.465.10">
    <property type="match status" value="1"/>
</dbReference>
<dbReference type="Gene3D" id="3.90.78.10">
    <property type="entry name" value="UDP-N-acetylenolpyruvoylglucosamine reductase, C-terminal domain"/>
    <property type="match status" value="1"/>
</dbReference>
<dbReference type="Gene3D" id="3.30.43.10">
    <property type="entry name" value="Uridine Diphospho-n-acetylenolpyruvylglucosamine Reductase, domain 2"/>
    <property type="match status" value="1"/>
</dbReference>
<dbReference type="HAMAP" id="MF_00037">
    <property type="entry name" value="MurB"/>
    <property type="match status" value="1"/>
</dbReference>
<dbReference type="InterPro" id="IPR016166">
    <property type="entry name" value="FAD-bd_PCMH"/>
</dbReference>
<dbReference type="InterPro" id="IPR036318">
    <property type="entry name" value="FAD-bd_PCMH-like_sf"/>
</dbReference>
<dbReference type="InterPro" id="IPR016167">
    <property type="entry name" value="FAD-bd_PCMH_sub1"/>
</dbReference>
<dbReference type="InterPro" id="IPR016169">
    <property type="entry name" value="FAD-bd_PCMH_sub2"/>
</dbReference>
<dbReference type="InterPro" id="IPR003170">
    <property type="entry name" value="MurB"/>
</dbReference>
<dbReference type="InterPro" id="IPR011601">
    <property type="entry name" value="MurB_C"/>
</dbReference>
<dbReference type="InterPro" id="IPR036635">
    <property type="entry name" value="MurB_C_sf"/>
</dbReference>
<dbReference type="InterPro" id="IPR006094">
    <property type="entry name" value="Oxid_FAD_bind_N"/>
</dbReference>
<dbReference type="NCBIfam" id="TIGR00179">
    <property type="entry name" value="murB"/>
    <property type="match status" value="1"/>
</dbReference>
<dbReference type="NCBIfam" id="NF010480">
    <property type="entry name" value="PRK13905.1"/>
    <property type="match status" value="1"/>
</dbReference>
<dbReference type="PANTHER" id="PTHR21071">
    <property type="entry name" value="UDP-N-ACETYLENOLPYRUVOYLGLUCOSAMINE REDUCTASE"/>
    <property type="match status" value="1"/>
</dbReference>
<dbReference type="PANTHER" id="PTHR21071:SF4">
    <property type="entry name" value="UDP-N-ACETYLENOLPYRUVOYLGLUCOSAMINE REDUCTASE"/>
    <property type="match status" value="1"/>
</dbReference>
<dbReference type="Pfam" id="PF01565">
    <property type="entry name" value="FAD_binding_4"/>
    <property type="match status" value="1"/>
</dbReference>
<dbReference type="Pfam" id="PF02873">
    <property type="entry name" value="MurB_C"/>
    <property type="match status" value="1"/>
</dbReference>
<dbReference type="SUPFAM" id="SSF56176">
    <property type="entry name" value="FAD-binding/transporter-associated domain-like"/>
    <property type="match status" value="1"/>
</dbReference>
<dbReference type="SUPFAM" id="SSF56194">
    <property type="entry name" value="Uridine diphospho-N-Acetylenolpyruvylglucosamine reductase, MurB, C-terminal domain"/>
    <property type="match status" value="1"/>
</dbReference>
<dbReference type="PROSITE" id="PS51387">
    <property type="entry name" value="FAD_PCMH"/>
    <property type="match status" value="1"/>
</dbReference>
<evidence type="ECO:0000250" key="1"/>
<evidence type="ECO:0000305" key="2"/>
<comment type="function">
    <text evidence="1">Cell wall formation.</text>
</comment>
<comment type="catalytic activity">
    <reaction>
        <text>UDP-N-acetyl-alpha-D-muramate + NADP(+) = UDP-N-acetyl-3-O-(1-carboxyvinyl)-alpha-D-glucosamine + NADPH + H(+)</text>
        <dbReference type="Rhea" id="RHEA:12248"/>
        <dbReference type="ChEBI" id="CHEBI:15378"/>
        <dbReference type="ChEBI" id="CHEBI:57783"/>
        <dbReference type="ChEBI" id="CHEBI:58349"/>
        <dbReference type="ChEBI" id="CHEBI:68483"/>
        <dbReference type="ChEBI" id="CHEBI:70757"/>
        <dbReference type="EC" id="1.3.1.98"/>
    </reaction>
</comment>
<comment type="cofactor">
    <cofactor evidence="1">
        <name>FAD</name>
        <dbReference type="ChEBI" id="CHEBI:57692"/>
    </cofactor>
</comment>
<comment type="pathway">
    <text>Cell wall biogenesis; peptidoglycan biosynthesis.</text>
</comment>
<comment type="subcellular location">
    <subcellularLocation>
        <location evidence="1">Cytoplasm</location>
    </subcellularLocation>
</comment>
<comment type="similarity">
    <text evidence="2">Belongs to the MurB family.</text>
</comment>
<organism>
    <name type="scientific">Bacillus anthracis</name>
    <dbReference type="NCBI Taxonomy" id="1392"/>
    <lineage>
        <taxon>Bacteria</taxon>
        <taxon>Bacillati</taxon>
        <taxon>Bacillota</taxon>
        <taxon>Bacilli</taxon>
        <taxon>Bacillales</taxon>
        <taxon>Bacillaceae</taxon>
        <taxon>Bacillus</taxon>
        <taxon>Bacillus cereus group</taxon>
    </lineage>
</organism>
<feature type="chain" id="PRO_0000179173" description="UDP-N-acetylenolpyruvoylglucosamine reductase 2">
    <location>
        <begin position="1"/>
        <end position="305"/>
    </location>
</feature>
<feature type="domain" description="FAD-binding PCMH-type">
    <location>
        <begin position="33"/>
        <end position="197"/>
    </location>
</feature>
<feature type="active site" evidence="1">
    <location>
        <position position="176"/>
    </location>
</feature>
<feature type="active site" description="Proton donor" evidence="1">
    <location>
        <position position="226"/>
    </location>
</feature>
<feature type="active site" evidence="1">
    <location>
        <position position="296"/>
    </location>
</feature>
<proteinExistence type="inferred from homology"/>